<gene>
    <name evidence="3" type="primary">PYGM</name>
</gene>
<evidence type="ECO:0000250" key="1">
    <source>
        <dbReference type="UniProtKB" id="P00489"/>
    </source>
</evidence>
<evidence type="ECO:0000250" key="2">
    <source>
        <dbReference type="UniProtKB" id="P09812"/>
    </source>
</evidence>
<evidence type="ECO:0000250" key="3">
    <source>
        <dbReference type="UniProtKB" id="P11217"/>
    </source>
</evidence>
<evidence type="ECO:0000250" key="4">
    <source>
        <dbReference type="UniProtKB" id="Q9WUB3"/>
    </source>
</evidence>
<evidence type="ECO:0000305" key="5"/>
<organism>
    <name type="scientific">Ovis aries</name>
    <name type="common">Sheep</name>
    <dbReference type="NCBI Taxonomy" id="9940"/>
    <lineage>
        <taxon>Eukaryota</taxon>
        <taxon>Metazoa</taxon>
        <taxon>Chordata</taxon>
        <taxon>Craniata</taxon>
        <taxon>Vertebrata</taxon>
        <taxon>Euteleostomi</taxon>
        <taxon>Mammalia</taxon>
        <taxon>Eutheria</taxon>
        <taxon>Laurasiatheria</taxon>
        <taxon>Artiodactyla</taxon>
        <taxon>Ruminantia</taxon>
        <taxon>Pecora</taxon>
        <taxon>Bovidae</taxon>
        <taxon>Caprinae</taxon>
        <taxon>Ovis</taxon>
    </lineage>
</organism>
<dbReference type="EC" id="2.4.1.1" evidence="3"/>
<dbReference type="EMBL" id="AF001899">
    <property type="protein sequence ID" value="AAB68800.1"/>
    <property type="molecule type" value="mRNA"/>
</dbReference>
<dbReference type="RefSeq" id="NP_001009192.1">
    <property type="nucleotide sequence ID" value="NM_001009192.2"/>
</dbReference>
<dbReference type="SMR" id="O18751"/>
<dbReference type="STRING" id="9940.ENSOARP00000009662"/>
<dbReference type="CAZy" id="GT35">
    <property type="family name" value="Glycosyltransferase Family 35"/>
</dbReference>
<dbReference type="PaxDb" id="9940-ENSOARP00000009662"/>
<dbReference type="Ensembl" id="ENSOART00180058341">
    <property type="protein sequence ID" value="ENSOARP00180031333"/>
    <property type="gene ID" value="ENSOARG00180034543"/>
</dbReference>
<dbReference type="Ensembl" id="ENSOART00215079239">
    <property type="protein sequence ID" value="ENSOARP00215043772"/>
    <property type="gene ID" value="ENSOARG00215046354"/>
</dbReference>
<dbReference type="Ensembl" id="ENSOART00220097282">
    <property type="protein sequence ID" value="ENSOARP00220050986"/>
    <property type="gene ID" value="ENSOARG00220058913"/>
</dbReference>
<dbReference type="Ensembl" id="ENSOART00225075237">
    <property type="protein sequence ID" value="ENSOARP00225038589"/>
    <property type="gene ID" value="ENSOARG00225045273"/>
</dbReference>
<dbReference type="GeneID" id="442998"/>
<dbReference type="KEGG" id="oas:442998"/>
<dbReference type="CTD" id="5837"/>
<dbReference type="eggNOG" id="KOG2099">
    <property type="taxonomic scope" value="Eukaryota"/>
</dbReference>
<dbReference type="HOGENOM" id="CLU_010198_1_1_1"/>
<dbReference type="OMA" id="GIEPCRC"/>
<dbReference type="OrthoDB" id="9215500at2759"/>
<dbReference type="Proteomes" id="UP000002356">
    <property type="component" value="Chromosome 21"/>
</dbReference>
<dbReference type="Bgee" id="ENSOARG00000008997">
    <property type="expression patterns" value="Expressed in longissimus thoracis muscle and 55 other cell types or tissues"/>
</dbReference>
<dbReference type="GO" id="GO:0005737">
    <property type="term" value="C:cytoplasm"/>
    <property type="evidence" value="ECO:0007669"/>
    <property type="project" value="TreeGrafter"/>
</dbReference>
<dbReference type="GO" id="GO:0008184">
    <property type="term" value="F:glycogen phosphorylase activity"/>
    <property type="evidence" value="ECO:0000250"/>
    <property type="project" value="UniProtKB"/>
</dbReference>
<dbReference type="GO" id="GO:0030170">
    <property type="term" value="F:pyridoxal phosphate binding"/>
    <property type="evidence" value="ECO:0007669"/>
    <property type="project" value="InterPro"/>
</dbReference>
<dbReference type="GO" id="GO:0005980">
    <property type="term" value="P:glycogen catabolic process"/>
    <property type="evidence" value="ECO:0000250"/>
    <property type="project" value="UniProtKB"/>
</dbReference>
<dbReference type="CDD" id="cd04300">
    <property type="entry name" value="GT35_Glycogen_Phosphorylase"/>
    <property type="match status" value="1"/>
</dbReference>
<dbReference type="FunFam" id="3.40.50.2000:FF:000005">
    <property type="entry name" value="Alpha-1,4 glucan phosphorylase"/>
    <property type="match status" value="1"/>
</dbReference>
<dbReference type="FunFam" id="3.40.50.2000:FF:000153">
    <property type="entry name" value="Alpha-1,4 glucan phosphorylase"/>
    <property type="match status" value="1"/>
</dbReference>
<dbReference type="FunFam" id="3.40.50.2000:FF:000197">
    <property type="entry name" value="Alpha-1,4 glucan phosphorylase"/>
    <property type="match status" value="1"/>
</dbReference>
<dbReference type="Gene3D" id="3.40.50.2000">
    <property type="entry name" value="Glycogen Phosphorylase B"/>
    <property type="match status" value="2"/>
</dbReference>
<dbReference type="InterPro" id="IPR011833">
    <property type="entry name" value="Glycg_phsphrylas"/>
</dbReference>
<dbReference type="InterPro" id="IPR000811">
    <property type="entry name" value="Glyco_trans_35"/>
</dbReference>
<dbReference type="InterPro" id="IPR035090">
    <property type="entry name" value="Pyridoxal_P_attach_site"/>
</dbReference>
<dbReference type="NCBIfam" id="TIGR02093">
    <property type="entry name" value="P_ylase"/>
    <property type="match status" value="1"/>
</dbReference>
<dbReference type="PANTHER" id="PTHR11468">
    <property type="entry name" value="GLYCOGEN PHOSPHORYLASE"/>
    <property type="match status" value="1"/>
</dbReference>
<dbReference type="PANTHER" id="PTHR11468:SF32">
    <property type="entry name" value="GLYCOGEN PHOSPHORYLASE, MUSCLE FORM"/>
    <property type="match status" value="1"/>
</dbReference>
<dbReference type="Pfam" id="PF00343">
    <property type="entry name" value="Phosphorylase"/>
    <property type="match status" value="1"/>
</dbReference>
<dbReference type="PIRSF" id="PIRSF000460">
    <property type="entry name" value="Pprylas_GlgP"/>
    <property type="match status" value="1"/>
</dbReference>
<dbReference type="SUPFAM" id="SSF53756">
    <property type="entry name" value="UDP-Glycosyltransferase/glycogen phosphorylase"/>
    <property type="match status" value="1"/>
</dbReference>
<dbReference type="PROSITE" id="PS00102">
    <property type="entry name" value="PHOSPHORYLASE"/>
    <property type="match status" value="1"/>
</dbReference>
<comment type="function">
    <text evidence="3">Allosteric enzyme that catalyzes the rate-limiting step in glycogen catabolism, the phosphorolytic cleavage of glycogen to produce glucose-1-phosphate, and plays a central role in maintaining cellular and organismal glucose homeostasis.</text>
</comment>
<comment type="catalytic activity">
    <reaction evidence="3">
        <text>[(1-&gt;4)-alpha-D-glucosyl](n) + phosphate = [(1-&gt;4)-alpha-D-glucosyl](n-1) + alpha-D-glucose 1-phosphate</text>
        <dbReference type="Rhea" id="RHEA:41732"/>
        <dbReference type="Rhea" id="RHEA-COMP:9584"/>
        <dbReference type="Rhea" id="RHEA-COMP:9586"/>
        <dbReference type="ChEBI" id="CHEBI:15444"/>
        <dbReference type="ChEBI" id="CHEBI:43474"/>
        <dbReference type="ChEBI" id="CHEBI:58601"/>
        <dbReference type="EC" id="2.4.1.1"/>
    </reaction>
    <physiologicalReaction direction="left-to-right" evidence="3">
        <dbReference type="Rhea" id="RHEA:41733"/>
    </physiologicalReaction>
</comment>
<comment type="cofactor">
    <cofactor evidence="1">
        <name>pyridoxal 5'-phosphate</name>
        <dbReference type="ChEBI" id="CHEBI:597326"/>
    </cofactor>
</comment>
<comment type="activity regulation">
    <text evidence="3">Allosterically regulated through the non-covalent binding of metabolites, being activated by AMP and inhibited by ATP, ADP, and glucose-6-phosphate. The activity is also controlled by post-translational modifications including phosphorylation.</text>
</comment>
<comment type="subunit">
    <text evidence="3">Homodimer. Homotetramer; to form the enzymatically active phosphorylase A.</text>
</comment>
<comment type="PTM">
    <text evidence="3">Phosphorylation of Ser-15 converts phosphorylase B (unphosphorylated) to phosphorylase A.</text>
</comment>
<comment type="similarity">
    <text evidence="5">Belongs to the glycogen phosphorylase family.</text>
</comment>
<proteinExistence type="evidence at transcript level"/>
<sequence length="842" mass="97307">MSRPLTDQEKRKQISVRGLAGVENVTELKKNFNRHLHFTLVKDRNVATPRDYYFALAYTVRDHLVGRWIRTQQHYYEKDPKRIYYLSLEFYIGRTLQNTMVNLALENACDEATYQLGLDMEELEEIEEDAGLGNGGLGRLAACFLDSMATLGLAAYGYGIRYEFGIFNQKISGGWQMEEADDWLRYGNPWEKARPEFTLPVHFYGRVEHTSQGAKWVDTQVVLAMPYDTPVPGYRNNVVNTMRLWSAKAPNDFNLKDFNVGGYIQAVLDRNLAENISRVLYPNDNFFEGKELRLKQEYFVVAATLQDIIRRFKSSKFGCLDPVRTNFDAFPDKVAIQLNDTHPSLAIPELMRILVDQERLEWEKAWEVTVKTCAYTNHTVLPEALERWPVHLIETLLPRHLQIIYEINQRFLNRVAAAFPGDVDRLRRMSLVEEGAVKRINMAHLCIAGSHAVNGVARIHSEILKKTIFKDFYELEPHKFQNKTNGITPRRWLVMCNPGLAEVIAERIGEEYIADLDQLRKLLSYVDDESFIRDVAKVKQENKLKFSAYLEKEYKVHINPNSLFDIQVKRIHEYKRQLLNCLHVITLYNRIKKEPNKFFVPRTVMIGGKAAPGYHMAKMIIRLITAIGDVVNHDPVVGDRLRVIFLENYRVSLAEKVIPAADLSEQISTAGTEASGTGNMKFMLNGALTIGTMDGANVEMAEEAGEENFFIFGMRVEDVERLDQKGYNAQEYYDRIPELRHIIDQLSSGFFSPKQPDLFKDIVNMLMHHDRFKVFADYEEYVKCQERVSALYKNPREWTRMVIRNIATSGKFSSDRTIAQYAREIWGVEPTRQRMPAPDEKI</sequence>
<protein>
    <recommendedName>
        <fullName evidence="3">Glycogen phosphorylase, muscle form</fullName>
        <ecNumber evidence="3">2.4.1.1</ecNumber>
    </recommendedName>
    <alternativeName>
        <fullName>Myophosphorylase</fullName>
    </alternativeName>
</protein>
<accession>O18751</accession>
<keyword id="KW-0007">Acetylation</keyword>
<keyword id="KW-0021">Allosteric enzyme</keyword>
<keyword id="KW-0119">Carbohydrate metabolism</keyword>
<keyword id="KW-0321">Glycogen metabolism</keyword>
<keyword id="KW-0328">Glycosyltransferase</keyword>
<keyword id="KW-0597">Phosphoprotein</keyword>
<keyword id="KW-0663">Pyridoxal phosphate</keyword>
<keyword id="KW-1185">Reference proteome</keyword>
<keyword id="KW-0808">Transferase</keyword>
<name>PYGM_SHEEP</name>
<reference key="1">
    <citation type="journal article" date="1997" name="Neuromuscul. Disord.">
        <title>A splice-site mutation causing ovine McArdle's disease.</title>
        <authorList>
            <person name="Tan P."/>
            <person name="Allen J.G."/>
            <person name="Wilton S.D."/>
            <person name="Akkari P.A."/>
            <person name="Huxtable C.R."/>
            <person name="Laing N.G."/>
        </authorList>
    </citation>
    <scope>NUCLEOTIDE SEQUENCE [MRNA]</scope>
    <source>
        <strain>Merino</strain>
        <tissue>Muscle</tissue>
    </source>
</reference>
<feature type="initiator methionine" description="Removed" evidence="1">
    <location>
        <position position="1"/>
    </location>
</feature>
<feature type="chain" id="PRO_0000188534" description="Glycogen phosphorylase, muscle form">
    <location>
        <begin position="2"/>
        <end position="842"/>
    </location>
</feature>
<feature type="binding site" evidence="3">
    <location>
        <position position="43"/>
    </location>
    <ligand>
        <name>AMP</name>
        <dbReference type="ChEBI" id="CHEBI:456215"/>
    </ligand>
</feature>
<feature type="binding site" evidence="1">
    <location>
        <position position="76"/>
    </location>
    <ligand>
        <name>AMP</name>
        <dbReference type="ChEBI" id="CHEBI:456215"/>
    </ligand>
</feature>
<feature type="binding site" evidence="3">
    <location>
        <begin position="310"/>
        <end position="319"/>
    </location>
    <ligand>
        <name>AMP</name>
        <dbReference type="ChEBI" id="CHEBI:456215"/>
    </ligand>
</feature>
<feature type="site" description="Involved in the association of subunits" evidence="1">
    <location>
        <position position="109"/>
    </location>
</feature>
<feature type="site" description="Involved in the association of subunits" evidence="1">
    <location>
        <position position="143"/>
    </location>
</feature>
<feature type="site" description="May be involved in allosteric control" evidence="1">
    <location>
        <position position="156"/>
    </location>
</feature>
<feature type="modified residue" description="N-acetylserine" evidence="1">
    <location>
        <position position="2"/>
    </location>
</feature>
<feature type="modified residue" description="Phosphoserine; by PHK; in form phosphorylase A" evidence="3">
    <location>
        <position position="15"/>
    </location>
</feature>
<feature type="modified residue" description="Phosphotyrosine" evidence="2">
    <location>
        <position position="204"/>
    </location>
</feature>
<feature type="modified residue" description="Phosphotyrosine" evidence="2">
    <location>
        <position position="227"/>
    </location>
</feature>
<feature type="modified residue" description="Phosphoserine" evidence="4">
    <location>
        <position position="430"/>
    </location>
</feature>
<feature type="modified residue" description="Phosphotyrosine" evidence="4">
    <location>
        <position position="473"/>
    </location>
</feature>
<feature type="modified residue" description="N6-(pyridoxal phosphate)lysine" evidence="1">
    <location>
        <position position="681"/>
    </location>
</feature>
<feature type="modified residue" description="Phosphoserine" evidence="2">
    <location>
        <position position="747"/>
    </location>
</feature>
<feature type="modified residue" description="Phosphoserine" evidence="2">
    <location>
        <position position="748"/>
    </location>
</feature>